<organism>
    <name type="scientific">Saccharomyces cerevisiae (strain ATCC 204508 / S288c)</name>
    <name type="common">Baker's yeast</name>
    <dbReference type="NCBI Taxonomy" id="559292"/>
    <lineage>
        <taxon>Eukaryota</taxon>
        <taxon>Fungi</taxon>
        <taxon>Dikarya</taxon>
        <taxon>Ascomycota</taxon>
        <taxon>Saccharomycotina</taxon>
        <taxon>Saccharomycetes</taxon>
        <taxon>Saccharomycetales</taxon>
        <taxon>Saccharomycetaceae</taxon>
        <taxon>Saccharomyces</taxon>
    </lineage>
</organism>
<gene>
    <name type="primary">BOR1</name>
    <name type="ordered locus">YNL275W</name>
    <name type="ORF">N0626</name>
</gene>
<name>BOR1_YEAST</name>
<accession>P53838</accession>
<accession>D6W0R9</accession>
<sequence length="576" mass="65028">MSNESTRVTVSRGCTASDECAQALERTNDELDRESSVSESRSDEESHEKLSRRRFPTLGIGIWLDLKDRIPYYKSDWVDAFNYRVIPSIVDTYFNNLLPAIAFAQDMFDRTDNSYGVNEVLLSSAMAGIVFGVLGGQPLCIVGVTGPISIFNYTVYEIIKPLNTSYFGFMFWICMWSMIFHLVLAFTNAVCLLQYVTTFPCDIFGLFINVVYIQKGIQILTRQFSAKSGEKSVQDGFASVVVALVMTAFGLFFKLFHYYPLFSHRIRTFISDYSTALSVLFWSSFTHFGGYLHDVKFKKLPITKAFFPTSKVNRPQNTWLAYEPIPVKDVFIALPFGIFLTILFYFDHNVSSLMAQRHQYKLKKPSSFHYDFALLGLTTCISGVLGIPAPNGLIPQAPLHTETLLVRDSNQKVISCVEQRFTNTFQGLMILGTMTRPLLVCLGEIPQAVLSGLFFIMGINGLMTNSIIQRLVFLFSDPNRRDNTSPLMKVSKKSMLIFLSFSLTGFAGEFAITNTIAAIGFPLVLLLSVLVSFSFAYIFPTEELKILDTNVAQKFTIKNLLLENIRDAKFCDKHED</sequence>
<dbReference type="EMBL" id="Z71551">
    <property type="protein sequence ID" value="CAA96183.1"/>
    <property type="molecule type" value="Genomic_DNA"/>
</dbReference>
<dbReference type="EMBL" id="BK006947">
    <property type="protein sequence ID" value="DAA10285.1"/>
    <property type="molecule type" value="Genomic_DNA"/>
</dbReference>
<dbReference type="PIR" id="S63249">
    <property type="entry name" value="S63249"/>
</dbReference>
<dbReference type="RefSeq" id="NP_014124.1">
    <property type="nucleotide sequence ID" value="NM_001183113.1"/>
</dbReference>
<dbReference type="SMR" id="P53838"/>
<dbReference type="BioGRID" id="35565">
    <property type="interactions" value="28"/>
</dbReference>
<dbReference type="DIP" id="DIP-8001N"/>
<dbReference type="FunCoup" id="P53838">
    <property type="interactions" value="501"/>
</dbReference>
<dbReference type="STRING" id="4932.YNL275W"/>
<dbReference type="TCDB" id="2.A.31.3.2">
    <property type="family name" value="the anion exchanger (ae) family"/>
</dbReference>
<dbReference type="iPTMnet" id="P53838"/>
<dbReference type="PaxDb" id="4932-YNL275W"/>
<dbReference type="PeptideAtlas" id="P53838"/>
<dbReference type="DNASU" id="855446"/>
<dbReference type="EnsemblFungi" id="YNL275W_mRNA">
    <property type="protein sequence ID" value="YNL275W"/>
    <property type="gene ID" value="YNL275W"/>
</dbReference>
<dbReference type="GeneID" id="855446"/>
<dbReference type="KEGG" id="sce:YNL275W"/>
<dbReference type="AGR" id="SGD:S000005219"/>
<dbReference type="SGD" id="S000005219">
    <property type="gene designation" value="BOR1"/>
</dbReference>
<dbReference type="VEuPathDB" id="FungiDB:YNL275W"/>
<dbReference type="eggNOG" id="KOG1172">
    <property type="taxonomic scope" value="Eukaryota"/>
</dbReference>
<dbReference type="HOGENOM" id="CLU_002289_7_2_1"/>
<dbReference type="InParanoid" id="P53838"/>
<dbReference type="OMA" id="RRAPFYW"/>
<dbReference type="OrthoDB" id="1735926at2759"/>
<dbReference type="BioCyc" id="YEAST:G3O-33269-MONOMER"/>
<dbReference type="BioGRID-ORCS" id="855446">
    <property type="hits" value="1 hit in 10 CRISPR screens"/>
</dbReference>
<dbReference type="PRO" id="PR:P53838"/>
<dbReference type="Proteomes" id="UP000002311">
    <property type="component" value="Chromosome XIV"/>
</dbReference>
<dbReference type="RNAct" id="P53838">
    <property type="molecule type" value="protein"/>
</dbReference>
<dbReference type="GO" id="GO:0071944">
    <property type="term" value="C:cell periphery"/>
    <property type="evidence" value="ECO:0007005"/>
    <property type="project" value="SGD"/>
</dbReference>
<dbReference type="GO" id="GO:0000324">
    <property type="term" value="C:fungal-type vacuole"/>
    <property type="evidence" value="ECO:0000314"/>
    <property type="project" value="SGD"/>
</dbReference>
<dbReference type="GO" id="GO:0016020">
    <property type="term" value="C:membrane"/>
    <property type="evidence" value="ECO:0000255"/>
    <property type="project" value="SGD"/>
</dbReference>
<dbReference type="GO" id="GO:0005886">
    <property type="term" value="C:plasma membrane"/>
    <property type="evidence" value="ECO:0000314"/>
    <property type="project" value="SGD"/>
</dbReference>
<dbReference type="GO" id="GO:0005774">
    <property type="term" value="C:vacuolar membrane"/>
    <property type="evidence" value="ECO:0007669"/>
    <property type="project" value="UniProtKB-SubCell"/>
</dbReference>
<dbReference type="GO" id="GO:0080139">
    <property type="term" value="F:borate efflux transmembrane transporter activity"/>
    <property type="evidence" value="ECO:0000314"/>
    <property type="project" value="SGD"/>
</dbReference>
<dbReference type="GO" id="GO:0005452">
    <property type="term" value="F:solute:inorganic anion antiporter activity"/>
    <property type="evidence" value="ECO:0007669"/>
    <property type="project" value="InterPro"/>
</dbReference>
<dbReference type="GO" id="GO:0046713">
    <property type="term" value="P:borate transport"/>
    <property type="evidence" value="ECO:0000314"/>
    <property type="project" value="SGD"/>
</dbReference>
<dbReference type="GO" id="GO:0006820">
    <property type="term" value="P:monoatomic anion transport"/>
    <property type="evidence" value="ECO:0007669"/>
    <property type="project" value="InterPro"/>
</dbReference>
<dbReference type="GO" id="GO:0050801">
    <property type="term" value="P:monoatomic ion homeostasis"/>
    <property type="evidence" value="ECO:0000318"/>
    <property type="project" value="GO_Central"/>
</dbReference>
<dbReference type="GO" id="GO:0006623">
    <property type="term" value="P:protein targeting to vacuole"/>
    <property type="evidence" value="ECO:0000315"/>
    <property type="project" value="SGD"/>
</dbReference>
<dbReference type="GO" id="GO:0055085">
    <property type="term" value="P:transmembrane transport"/>
    <property type="evidence" value="ECO:0000318"/>
    <property type="project" value="GO_Central"/>
</dbReference>
<dbReference type="FunFam" id="1.10.287.570:FF:000003">
    <property type="entry name" value="Anion exchange family protein"/>
    <property type="match status" value="1"/>
</dbReference>
<dbReference type="Gene3D" id="1.10.287.570">
    <property type="entry name" value="Helical hairpin bin"/>
    <property type="match status" value="1"/>
</dbReference>
<dbReference type="InterPro" id="IPR011531">
    <property type="entry name" value="HCO3_transpt-like_TM_dom"/>
</dbReference>
<dbReference type="InterPro" id="IPR003020">
    <property type="entry name" value="HCO3_transpt_euk"/>
</dbReference>
<dbReference type="PANTHER" id="PTHR11453">
    <property type="entry name" value="ANION EXCHANGE PROTEIN"/>
    <property type="match status" value="1"/>
</dbReference>
<dbReference type="PANTHER" id="PTHR11453:SF82">
    <property type="entry name" value="BORON TRANSPORTER 1"/>
    <property type="match status" value="1"/>
</dbReference>
<dbReference type="Pfam" id="PF00955">
    <property type="entry name" value="HCO3_cotransp"/>
    <property type="match status" value="2"/>
</dbReference>
<feature type="chain" id="PRO_0000079243" description="Boron transporter 1">
    <location>
        <begin position="1"/>
        <end position="576"/>
    </location>
</feature>
<feature type="topological domain" description="Cytoplasmic" evidence="1">
    <location>
        <begin position="1"/>
        <end position="84"/>
    </location>
</feature>
<feature type="transmembrane region" description="Helical" evidence="1">
    <location>
        <begin position="85"/>
        <end position="105"/>
    </location>
</feature>
<feature type="topological domain" description="Extracellular" evidence="1">
    <location>
        <begin position="106"/>
        <end position="116"/>
    </location>
</feature>
<feature type="transmembrane region" description="Helical" evidence="1">
    <location>
        <begin position="117"/>
        <end position="134"/>
    </location>
</feature>
<feature type="topological domain" description="Cytoplasmic" evidence="1">
    <location>
        <begin position="135"/>
        <end position="140"/>
    </location>
</feature>
<feature type="transmembrane region" description="Helical" evidence="1">
    <location>
        <begin position="141"/>
        <end position="160"/>
    </location>
</feature>
<feature type="topological domain" description="Extracellular" evidence="1">
    <location>
        <begin position="161"/>
        <end position="165"/>
    </location>
</feature>
<feature type="transmembrane region" description="Helical" evidence="1">
    <location>
        <begin position="166"/>
        <end position="186"/>
    </location>
</feature>
<feature type="topological domain" description="Cytoplasmic" evidence="1">
    <location>
        <begin position="187"/>
        <end position="192"/>
    </location>
</feature>
<feature type="transmembrane region" description="Helical" evidence="1">
    <location>
        <begin position="193"/>
        <end position="213"/>
    </location>
</feature>
<feature type="topological domain" description="Extracellular" evidence="1">
    <location>
        <begin position="214"/>
        <end position="235"/>
    </location>
</feature>
<feature type="transmembrane region" description="Helical" evidence="1">
    <location>
        <begin position="236"/>
        <end position="256"/>
    </location>
</feature>
<feature type="topological domain" description="Cytoplasmic" evidence="1">
    <location>
        <begin position="257"/>
        <end position="274"/>
    </location>
</feature>
<feature type="transmembrane region" description="Helical" evidence="1">
    <location>
        <begin position="275"/>
        <end position="295"/>
    </location>
</feature>
<feature type="topological domain" description="Extracellular" evidence="1">
    <location>
        <begin position="296"/>
        <end position="329"/>
    </location>
</feature>
<feature type="transmembrane region" description="Helical" evidence="1">
    <location>
        <begin position="330"/>
        <end position="350"/>
    </location>
</feature>
<feature type="topological domain" description="Cytoplasmic" evidence="1">
    <location>
        <begin position="351"/>
        <end position="373"/>
    </location>
</feature>
<feature type="transmembrane region" description="Helical" evidence="1">
    <location>
        <begin position="374"/>
        <end position="394"/>
    </location>
</feature>
<feature type="topological domain" description="Extracellular" evidence="1">
    <location>
        <begin position="395"/>
        <end position="438"/>
    </location>
</feature>
<feature type="transmembrane region" description="Helical" evidence="1">
    <location>
        <begin position="439"/>
        <end position="459"/>
    </location>
</feature>
<feature type="topological domain" description="Cytoplasmic" evidence="1">
    <location>
        <begin position="460"/>
        <end position="495"/>
    </location>
</feature>
<feature type="transmembrane region" description="Helical" evidence="1">
    <location>
        <begin position="496"/>
        <end position="516"/>
    </location>
</feature>
<feature type="topological domain" description="Extracellular" evidence="1">
    <location>
        <begin position="517"/>
        <end position="518"/>
    </location>
</feature>
<feature type="transmembrane region" description="Helical" evidence="1">
    <location>
        <begin position="519"/>
        <end position="539"/>
    </location>
</feature>
<feature type="topological domain" description="Cytoplasmic" evidence="1">
    <location>
        <begin position="540"/>
        <end position="576"/>
    </location>
</feature>
<feature type="region of interest" description="Disordered" evidence="2">
    <location>
        <begin position="19"/>
        <end position="48"/>
    </location>
</feature>
<feature type="compositionally biased region" description="Basic and acidic residues" evidence="2">
    <location>
        <begin position="26"/>
        <end position="48"/>
    </location>
</feature>
<evidence type="ECO:0000255" key="1"/>
<evidence type="ECO:0000256" key="2">
    <source>
        <dbReference type="SAM" id="MobiDB-lite"/>
    </source>
</evidence>
<evidence type="ECO:0000269" key="3">
    <source>
    </source>
</evidence>
<evidence type="ECO:0000269" key="4">
    <source>
    </source>
</evidence>
<evidence type="ECO:0000269" key="5">
    <source>
    </source>
</evidence>
<evidence type="ECO:0000269" key="6">
    <source>
    </source>
</evidence>
<evidence type="ECO:0000269" key="7">
    <source>
    </source>
</evidence>
<evidence type="ECO:0000269" key="8">
    <source>
    </source>
</evidence>
<evidence type="ECO:0000305" key="9"/>
<protein>
    <recommendedName>
        <fullName>Boron transporter 1</fullName>
    </recommendedName>
</protein>
<reference key="1">
    <citation type="journal article" date="1997" name="Nature">
        <title>The nucleotide sequence of Saccharomyces cerevisiae chromosome XIV and its evolutionary implications.</title>
        <authorList>
            <person name="Philippsen P."/>
            <person name="Kleine K."/>
            <person name="Poehlmann R."/>
            <person name="Duesterhoeft A."/>
            <person name="Hamberg K."/>
            <person name="Hegemann J.H."/>
            <person name="Obermaier B."/>
            <person name="Urrestarazu L.A."/>
            <person name="Aert R."/>
            <person name="Albermann K."/>
            <person name="Altmann R."/>
            <person name="Andre B."/>
            <person name="Baladron V."/>
            <person name="Ballesta J.P.G."/>
            <person name="Becam A.-M."/>
            <person name="Beinhauer J.D."/>
            <person name="Boskovic J."/>
            <person name="Buitrago M.J."/>
            <person name="Bussereau F."/>
            <person name="Coster F."/>
            <person name="Crouzet M."/>
            <person name="D'Angelo M."/>
            <person name="Dal Pero F."/>
            <person name="De Antoni A."/>
            <person name="del Rey F."/>
            <person name="Doignon F."/>
            <person name="Domdey H."/>
            <person name="Dubois E."/>
            <person name="Fiedler T.A."/>
            <person name="Fleig U."/>
            <person name="Floeth M."/>
            <person name="Fritz C."/>
            <person name="Gaillardin C."/>
            <person name="Garcia-Cantalejo J.M."/>
            <person name="Glansdorff N."/>
            <person name="Goffeau A."/>
            <person name="Gueldener U."/>
            <person name="Herbert C.J."/>
            <person name="Heumann K."/>
            <person name="Heuss-Neitzel D."/>
            <person name="Hilbert H."/>
            <person name="Hinni K."/>
            <person name="Iraqui Houssaini I."/>
            <person name="Jacquet M."/>
            <person name="Jimenez A."/>
            <person name="Jonniaux J.-L."/>
            <person name="Karpfinger-Hartl L."/>
            <person name="Lanfranchi G."/>
            <person name="Lepingle A."/>
            <person name="Levesque H."/>
            <person name="Lyck R."/>
            <person name="Maftahi M."/>
            <person name="Mallet L."/>
            <person name="Maurer C.T.C."/>
            <person name="Messenguy F."/>
            <person name="Mewes H.-W."/>
            <person name="Moestl D."/>
            <person name="Nasr F."/>
            <person name="Nicaud J.-M."/>
            <person name="Niedenthal R.K."/>
            <person name="Pandolfo D."/>
            <person name="Pierard A."/>
            <person name="Piravandi E."/>
            <person name="Planta R.J."/>
            <person name="Pohl T.M."/>
            <person name="Purnelle B."/>
            <person name="Rebischung C."/>
            <person name="Remacha M.A."/>
            <person name="Revuelta J.L."/>
            <person name="Rinke M."/>
            <person name="Saiz J.E."/>
            <person name="Sartorello F."/>
            <person name="Scherens B."/>
            <person name="Sen-Gupta M."/>
            <person name="Soler-Mira A."/>
            <person name="Urbanus J.H.M."/>
            <person name="Valle G."/>
            <person name="Van Dyck L."/>
            <person name="Verhasselt P."/>
            <person name="Vierendeels F."/>
            <person name="Vissers S."/>
            <person name="Voet M."/>
            <person name="Volckaert G."/>
            <person name="Wach A."/>
            <person name="Wambutt R."/>
            <person name="Wedler H."/>
            <person name="Zollner A."/>
            <person name="Hani J."/>
        </authorList>
    </citation>
    <scope>NUCLEOTIDE SEQUENCE [LARGE SCALE GENOMIC DNA]</scope>
    <source>
        <strain>ATCC 204508 / S288c</strain>
    </source>
</reference>
<reference key="2">
    <citation type="journal article" date="2014" name="G3 (Bethesda)">
        <title>The reference genome sequence of Saccharomyces cerevisiae: Then and now.</title>
        <authorList>
            <person name="Engel S.R."/>
            <person name="Dietrich F.S."/>
            <person name="Fisk D.G."/>
            <person name="Binkley G."/>
            <person name="Balakrishnan R."/>
            <person name="Costanzo M.C."/>
            <person name="Dwight S.S."/>
            <person name="Hitz B.C."/>
            <person name="Karra K."/>
            <person name="Nash R.S."/>
            <person name="Weng S."/>
            <person name="Wong E.D."/>
            <person name="Lloyd P."/>
            <person name="Skrzypek M.S."/>
            <person name="Miyasato S.R."/>
            <person name="Simison M."/>
            <person name="Cherry J.M."/>
        </authorList>
    </citation>
    <scope>GENOME REANNOTATION</scope>
    <source>
        <strain>ATCC 204508 / S288c</strain>
    </source>
</reference>
<reference key="3">
    <citation type="journal article" date="2001" name="Am. J. Physiol.">
        <title>Expression and characterization of the anion transporter homologue YNL275w in Saccharomyces cerevisiae.</title>
        <authorList>
            <person name="Zhao R."/>
            <person name="Reithmeier R.A.F."/>
        </authorList>
    </citation>
    <scope>FUNCTION</scope>
    <scope>SUBCELLULAR LOCATION</scope>
    <scope>TOPOLOGY</scope>
</reference>
<reference key="4">
    <citation type="journal article" date="2003" name="Nature">
        <title>Global analysis of protein expression in yeast.</title>
        <authorList>
            <person name="Ghaemmaghami S."/>
            <person name="Huh W.-K."/>
            <person name="Bower K."/>
            <person name="Howson R.W."/>
            <person name="Belle A."/>
            <person name="Dephoure N."/>
            <person name="O'Shea E.K."/>
            <person name="Weissman J.S."/>
        </authorList>
    </citation>
    <scope>LEVEL OF PROTEIN EXPRESSION [LARGE SCALE ANALYSIS]</scope>
</reference>
<reference key="5">
    <citation type="journal article" date="2006" name="FEMS Microbiol. Lett.">
        <title>Roles of BOR1, DUR3, and FPS1 in boron transport and tolerance in Saccharomyces cerevisiae.</title>
        <authorList>
            <person name="Nozawa A."/>
            <person name="Takano J."/>
            <person name="Kobayashi M."/>
            <person name="von Wiren N."/>
            <person name="Fujiwara T."/>
        </authorList>
    </citation>
    <scope>FUNCTION</scope>
</reference>
<reference key="6">
    <citation type="journal article" date="2006" name="J. Biol. Chem.">
        <title>Enolase activates homotypic vacuole fusion and protein transport to the vacuole in yeast.</title>
        <authorList>
            <person name="Decker B.L."/>
            <person name="Wickner W.T."/>
        </authorList>
    </citation>
    <scope>FUNCTION</scope>
    <scope>SUBCELLULAR LOCATION</scope>
</reference>
<reference key="7">
    <citation type="journal article" date="2006" name="Proc. Natl. Acad. Sci. U.S.A.">
        <title>A global topology map of the Saccharomyces cerevisiae membrane proteome.</title>
        <authorList>
            <person name="Kim H."/>
            <person name="Melen K."/>
            <person name="Oesterberg M."/>
            <person name="von Heijne G."/>
        </authorList>
    </citation>
    <scope>TOPOLOGY [LARGE SCALE ANALYSIS]</scope>
    <source>
        <strain>ATCC 208353 / W303-1A</strain>
    </source>
</reference>
<reference key="8">
    <citation type="journal article" date="2007" name="Am. J. Physiol.">
        <title>Transport and regulatory characteristics of the yeast bicarbonate transporter homolog Bor1p.</title>
        <authorList>
            <person name="Jennings M.L."/>
            <person name="Howren T.R."/>
            <person name="Cui J."/>
            <person name="Winters M."/>
            <person name="Hannigan R."/>
        </authorList>
    </citation>
    <scope>FUNCTION</scope>
</reference>
<reference key="9">
    <citation type="journal article" date="2007" name="FEMS Microbiol. Lett.">
        <title>Saccharomyces cerevisiae Bor1p is a boron exporter and a key determinant of boron tolerance.</title>
        <authorList>
            <person name="Takano J."/>
            <person name="Kobayashi M."/>
            <person name="Noda Y."/>
            <person name="Fujiwara T."/>
        </authorList>
    </citation>
    <scope>FUNCTION</scope>
    <scope>SUBCELLULAR LOCATION</scope>
</reference>
<proteinExistence type="evidence at protein level"/>
<keyword id="KW-0039">Anion exchange</keyword>
<keyword id="KW-1003">Cell membrane</keyword>
<keyword id="KW-0406">Ion transport</keyword>
<keyword id="KW-0472">Membrane</keyword>
<keyword id="KW-1185">Reference proteome</keyword>
<keyword id="KW-0812">Transmembrane</keyword>
<keyword id="KW-1133">Transmembrane helix</keyword>
<keyword id="KW-0813">Transport</keyword>
<keyword id="KW-0926">Vacuole</keyword>
<comment type="function">
    <text evidence="3 5 6 7 8">Functions in boric acid/borate export across the plasma membrane, and thereby protects yeast cells from boron toxicity. Involved in the trafficking of proteins to the vacuole.</text>
</comment>
<comment type="subcellular location">
    <subcellularLocation>
        <location>Cell membrane</location>
        <topology>Multi-pass membrane protein</topology>
    </subcellularLocation>
    <subcellularLocation>
        <location>Vacuole membrane</location>
        <topology>Multi-pass membrane protein</topology>
    </subcellularLocation>
</comment>
<comment type="miscellaneous">
    <text evidence="4">Present with 195 molecules/cell in log phase SD medium.</text>
</comment>
<comment type="similarity">
    <text evidence="9">Belongs to the anion exchanger (TC 2.A.31) family.</text>
</comment>